<protein>
    <recommendedName>
        <fullName>Calcium-activated potassium channel subunit alpha-1</fullName>
    </recommendedName>
    <alternativeName>
        <fullName>BK channel</fullName>
    </alternativeName>
    <alternativeName>
        <fullName>BKCA alpha</fullName>
    </alternativeName>
    <alternativeName>
        <fullName>Calcium-activated potassium channel, subfamily M subunit alpha-1</fullName>
    </alternativeName>
    <alternativeName>
        <fullName>K(VCA)alpha</fullName>
    </alternativeName>
    <alternativeName>
        <fullName>KCa1.1</fullName>
    </alternativeName>
    <alternativeName>
        <fullName>Maxi K channel</fullName>
        <shortName>MaxiK</shortName>
    </alternativeName>
    <alternativeName>
        <fullName>Slo-alpha</fullName>
    </alternativeName>
    <alternativeName>
        <fullName>Slo1</fullName>
    </alternativeName>
    <alternativeName>
        <fullName>Slowpoke homolog</fullName>
        <shortName>Slo homolog</shortName>
        <shortName>xSlo</shortName>
    </alternativeName>
</protein>
<gene>
    <name type="primary">kcnma1</name>
    <name type="synonym">kcnma</name>
    <name type="synonym">xslo</name>
</gene>
<dbReference type="EMBL" id="AF274053">
    <property type="protein sequence ID" value="AAK69394.1"/>
    <property type="molecule type" value="mRNA"/>
</dbReference>
<dbReference type="RefSeq" id="NP_001079159.1">
    <molecule id="Q90ZC7-1"/>
    <property type="nucleotide sequence ID" value="NM_001085690.1"/>
</dbReference>
<dbReference type="SMR" id="Q90ZC7"/>
<dbReference type="GeneID" id="373712"/>
<dbReference type="KEGG" id="xla:373712"/>
<dbReference type="AGR" id="Xenbase:XB-GENE-922343"/>
<dbReference type="CTD" id="373712"/>
<dbReference type="Xenbase" id="XB-GENE-922343">
    <property type="gene designation" value="kcnma1.L"/>
</dbReference>
<dbReference type="OrthoDB" id="10035564at2759"/>
<dbReference type="Proteomes" id="UP000186698">
    <property type="component" value="Chromosome 7L"/>
</dbReference>
<dbReference type="Bgee" id="373712">
    <property type="expression patterns" value="Expressed in brain and 15 other cell types or tissues"/>
</dbReference>
<dbReference type="GO" id="GO:0034702">
    <property type="term" value="C:monoatomic ion channel complex"/>
    <property type="evidence" value="ECO:0007669"/>
    <property type="project" value="UniProtKB-KW"/>
</dbReference>
<dbReference type="GO" id="GO:0045211">
    <property type="term" value="C:postsynaptic membrane"/>
    <property type="evidence" value="ECO:0000318"/>
    <property type="project" value="GO_Central"/>
</dbReference>
<dbReference type="GO" id="GO:0060072">
    <property type="term" value="F:large conductance calcium-activated potassium channel activity"/>
    <property type="evidence" value="ECO:0000318"/>
    <property type="project" value="GO_Central"/>
</dbReference>
<dbReference type="GO" id="GO:0046872">
    <property type="term" value="F:metal ion binding"/>
    <property type="evidence" value="ECO:0007669"/>
    <property type="project" value="UniProtKB-KW"/>
</dbReference>
<dbReference type="GO" id="GO:0071805">
    <property type="term" value="P:potassium ion transmembrane transport"/>
    <property type="evidence" value="ECO:0000318"/>
    <property type="project" value="GO_Central"/>
</dbReference>
<dbReference type="FunFam" id="3.40.50.720:FF:000098">
    <property type="entry name" value="calcium-activated potassium channel subunit alpha-1 isoform X3"/>
    <property type="match status" value="1"/>
</dbReference>
<dbReference type="FunFam" id="3.40.50.720:FF:000005">
    <property type="entry name" value="calcium-activated potassium channel subunit alpha-1 isoform X6"/>
    <property type="match status" value="1"/>
</dbReference>
<dbReference type="FunFam" id="1.10.287.70:FF:000015">
    <property type="entry name" value="Calcium-activated potassium channel subunit alpha-1 isoform X7"/>
    <property type="match status" value="1"/>
</dbReference>
<dbReference type="Gene3D" id="1.10.287.70">
    <property type="match status" value="1"/>
</dbReference>
<dbReference type="Gene3D" id="3.40.50.720">
    <property type="entry name" value="NAD(P)-binding Rossmann-like Domain"/>
    <property type="match status" value="2"/>
</dbReference>
<dbReference type="InterPro" id="IPR005821">
    <property type="entry name" value="Ion_trans_dom"/>
</dbReference>
<dbReference type="InterPro" id="IPR003929">
    <property type="entry name" value="K_chnl_BK_asu"/>
</dbReference>
<dbReference type="InterPro" id="IPR047871">
    <property type="entry name" value="K_chnl_Slo-like"/>
</dbReference>
<dbReference type="InterPro" id="IPR036291">
    <property type="entry name" value="NAD(P)-bd_dom_sf"/>
</dbReference>
<dbReference type="InterPro" id="IPR003148">
    <property type="entry name" value="RCK_N"/>
</dbReference>
<dbReference type="InterPro" id="IPR048735">
    <property type="entry name" value="Slowpoke-like_C"/>
</dbReference>
<dbReference type="PANTHER" id="PTHR10027">
    <property type="entry name" value="CALCIUM-ACTIVATED POTASSIUM CHANNEL ALPHA CHAIN"/>
    <property type="match status" value="1"/>
</dbReference>
<dbReference type="PANTHER" id="PTHR10027:SF33">
    <property type="entry name" value="CALCIUM-ACTIVATED POTASSIUM CHANNEL SUBUNIT ALPHA-1-RELATED"/>
    <property type="match status" value="1"/>
</dbReference>
<dbReference type="Pfam" id="PF03493">
    <property type="entry name" value="BK_channel_a"/>
    <property type="match status" value="1"/>
</dbReference>
<dbReference type="Pfam" id="PF00520">
    <property type="entry name" value="Ion_trans"/>
    <property type="match status" value="1"/>
</dbReference>
<dbReference type="Pfam" id="PF22614">
    <property type="entry name" value="Slo-like_RCK"/>
    <property type="match status" value="2"/>
</dbReference>
<dbReference type="Pfam" id="PF21014">
    <property type="entry name" value="Slowpoke_C"/>
    <property type="match status" value="1"/>
</dbReference>
<dbReference type="PRINTS" id="PR01449">
    <property type="entry name" value="BKCHANNELA"/>
</dbReference>
<dbReference type="PRINTS" id="PR00169">
    <property type="entry name" value="KCHANNEL"/>
</dbReference>
<dbReference type="SUPFAM" id="SSF51735">
    <property type="entry name" value="NAD(P)-binding Rossmann-fold domains"/>
    <property type="match status" value="1"/>
</dbReference>
<dbReference type="SUPFAM" id="SSF81324">
    <property type="entry name" value="Voltage-gated potassium channels"/>
    <property type="match status" value="1"/>
</dbReference>
<dbReference type="PROSITE" id="PS51201">
    <property type="entry name" value="RCK_N"/>
    <property type="match status" value="2"/>
</dbReference>
<accession>Q90ZC7</accession>
<feature type="chain" id="PRO_0000054139" description="Calcium-activated potassium channel subunit alpha-1">
    <location>
        <begin position="1"/>
        <end position="1196"/>
    </location>
</feature>
<feature type="topological domain" description="Extracellular" evidence="4">
    <location>
        <begin position="1"/>
        <end position="52"/>
    </location>
</feature>
<feature type="transmembrane region" description="Helical; Name=Segment S0" evidence="4">
    <location>
        <begin position="53"/>
        <end position="73"/>
    </location>
</feature>
<feature type="topological domain" description="Cytoplasmic" evidence="4">
    <location>
        <begin position="74"/>
        <end position="146"/>
    </location>
</feature>
<feature type="transmembrane region" description="Helical; Name=Segment S1" evidence="4">
    <location>
        <begin position="147"/>
        <end position="167"/>
    </location>
</feature>
<feature type="topological domain" description="Extracellular" evidence="4">
    <location>
        <begin position="168"/>
        <end position="182"/>
    </location>
</feature>
<feature type="transmembrane region" description="Helical; Name=Segment S2" evidence="4">
    <location>
        <begin position="183"/>
        <end position="203"/>
    </location>
</feature>
<feature type="topological domain" description="Cytoplasmic" evidence="4">
    <location>
        <begin position="204"/>
        <end position="207"/>
    </location>
</feature>
<feature type="transmembrane region" description="Helical; Name=Segment S3" evidence="4">
    <location>
        <begin position="208"/>
        <end position="228"/>
    </location>
</feature>
<feature type="topological domain" description="Extracellular" evidence="4">
    <location>
        <begin position="229"/>
        <end position="232"/>
    </location>
</feature>
<feature type="transmembrane region" description="Helical; Voltage-sensor; Name=Segment S4" evidence="4">
    <location>
        <begin position="233"/>
        <end position="253"/>
    </location>
</feature>
<feature type="topological domain" description="Cytoplasmic" evidence="4">
    <location>
        <begin position="254"/>
        <end position="268"/>
    </location>
</feature>
<feature type="transmembrane region" description="Helical; Name=Segment S5" evidence="4">
    <location>
        <begin position="269"/>
        <end position="289"/>
    </location>
</feature>
<feature type="topological domain" description="Extracellular" evidence="4">
    <location>
        <begin position="290"/>
        <end position="303"/>
    </location>
</feature>
<feature type="intramembrane region" description="Pore-forming; Name=P region" evidence="4">
    <location>
        <begin position="304"/>
        <end position="326"/>
    </location>
</feature>
<feature type="topological domain" description="Extracellular" evidence="4">
    <location>
        <begin position="327"/>
        <end position="335"/>
    </location>
</feature>
<feature type="transmembrane region" description="Helical; Name=Segment S6" evidence="4">
    <location>
        <begin position="336"/>
        <end position="356"/>
    </location>
</feature>
<feature type="topological domain" description="Cytoplasmic" evidence="4">
    <location>
        <begin position="357"/>
        <end position="1196"/>
    </location>
</feature>
<feature type="domain" description="RCK N-terminal 1" evidence="5">
    <location>
        <begin position="375"/>
        <end position="517"/>
    </location>
</feature>
<feature type="domain" description="RCK N-terminal 2" evidence="5">
    <location>
        <begin position="750"/>
        <end position="894"/>
    </location>
</feature>
<feature type="region of interest" description="Segment S7">
    <location>
        <begin position="524"/>
        <end position="544"/>
    </location>
</feature>
<feature type="region of interest" description="Segment S8">
    <location>
        <begin position="581"/>
        <end position="601"/>
    </location>
</feature>
<feature type="region of interest" description="Heme-binding motif" evidence="3">
    <location>
        <begin position="645"/>
        <end position="649"/>
    </location>
</feature>
<feature type="region of interest" description="Disordered" evidence="6">
    <location>
        <begin position="672"/>
        <end position="697"/>
    </location>
</feature>
<feature type="region of interest" description="Segment S9">
    <location>
        <begin position="748"/>
        <end position="768"/>
    </location>
</feature>
<feature type="region of interest" description="Segment S10">
    <location>
        <begin position="943"/>
        <end position="963"/>
    </location>
</feature>
<feature type="region of interest" description="Disordered" evidence="6">
    <location>
        <begin position="1098"/>
        <end position="1149"/>
    </location>
</feature>
<feature type="short sequence motif" description="Selectivity for potassium">
    <location>
        <begin position="320"/>
        <end position="323"/>
    </location>
</feature>
<feature type="short sequence motif" description="Calcium bowl" evidence="2">
    <location>
        <begin position="914"/>
        <end position="936"/>
    </location>
</feature>
<feature type="compositionally biased region" description="Low complexity" evidence="6">
    <location>
        <begin position="1098"/>
        <end position="1119"/>
    </location>
</feature>
<feature type="compositionally biased region" description="Polar residues" evidence="6">
    <location>
        <begin position="1120"/>
        <end position="1129"/>
    </location>
</feature>
<feature type="compositionally biased region" description="Basic and acidic residues" evidence="6">
    <location>
        <begin position="1133"/>
        <end position="1149"/>
    </location>
</feature>
<feature type="binding site" evidence="9">
    <location>
        <position position="407"/>
    </location>
    <ligand>
        <name>Mg(2+)</name>
        <dbReference type="ChEBI" id="CHEBI:18420"/>
    </ligand>
</feature>
<feature type="binding site" evidence="9">
    <location>
        <position position="430"/>
    </location>
    <ligand>
        <name>Mg(2+)</name>
        <dbReference type="ChEBI" id="CHEBI:18420"/>
    </ligand>
</feature>
<feature type="binding site" evidence="9">
    <location>
        <position position="432"/>
    </location>
    <ligand>
        <name>Mg(2+)</name>
        <dbReference type="ChEBI" id="CHEBI:18420"/>
    </ligand>
</feature>
<feature type="binding site" evidence="2">
    <location>
        <position position="923"/>
    </location>
    <ligand>
        <name>Ca(2+)</name>
        <dbReference type="ChEBI" id="CHEBI:29108"/>
    </ligand>
</feature>
<feature type="binding site" evidence="2">
    <location>
        <position position="926"/>
    </location>
    <ligand>
        <name>Ca(2+)</name>
        <dbReference type="ChEBI" id="CHEBI:29108"/>
    </ligand>
</feature>
<feature type="binding site" evidence="2">
    <location>
        <position position="929"/>
    </location>
    <ligand>
        <name>Ca(2+)</name>
        <dbReference type="ChEBI" id="CHEBI:29108"/>
    </ligand>
</feature>
<feature type="binding site" evidence="2">
    <location>
        <position position="931"/>
    </location>
    <ligand>
        <name>Ca(2+)</name>
        <dbReference type="ChEBI" id="CHEBI:29108"/>
    </ligand>
</feature>
<feature type="splice variant" id="VSP_009992" description="In isoform 2." evidence="8">
    <original>L</original>
    <variation>LLLTLPCLTALPVFAV</variation>
    <location>
        <position position="666"/>
    </location>
</feature>
<feature type="splice variant" id="VSP_009993" description="In isoform 3." evidence="8">
    <original>L</original>
    <variation>LIYSKMSIRKRLIQACCIGCSEIDCSCMSGTLRNNMGTLEQAFPISPVTVNDFSTSLRGF</variation>
    <location>
        <position position="666"/>
    </location>
</feature>
<feature type="splice variant" id="VSP_009994" description="In isoform 4." evidence="8">
    <original>L</original>
    <variation>PKMSIRKRLIQACCIGCSEIDCSCMSGTLRNNMGTLEQAFPISPVTVNDFSTSLRGF</variation>
    <location>
        <position position="666"/>
    </location>
</feature>
<feature type="splice variant" id="VSP_009995" description="In isoform 5." evidence="8">
    <original>L</original>
    <variation>PAKEEHRLSIHRLSIHSQAAKASYSVTSSKLCTEQQEPVPLVNNRKGSLFLPCDSSLLHLQLLSSSGTGHHTSIKLQRALSLPGKYRYHPNQPILIQKQF</variation>
    <location>
        <position position="666"/>
    </location>
</feature>
<comment type="function">
    <text evidence="3 7">Potassium channel activated by both membrane depolarization or increase in cytosolic Ca(2+) that mediates export of K(+). It is also activated by the concentration of cytosolic Mg(2+). Its activation dampens the excitatory events that elevate the cytosolic Ca(2+) concentration and/or depolarize the cell membrane. It therefore contributes to repolarization of the membrane potential. Plays a key role in controlling excitability in a number of systems, such as regulation of the contraction of smooth muscle, the tuning of hair cells in the cochlea, regulation of transmitter release, and innate immunity. In smooth muscles, its activation by high level of Ca(2+), caused by ryanodine receptors in the sarcoplasmic reticulum, regulates the membrane potential. In cochlea cells, its number and kinetic properties partly determine the characteristic frequency of each hair cell and thereby helps to establish a tonotopic map. Highly sensitive to both iberiotoxin (IbTx) and charybdotoxin (CTX) (By similarity).</text>
</comment>
<comment type="catalytic activity">
    <reaction evidence="7">
        <text>K(+)(in) = K(+)(out)</text>
        <dbReference type="Rhea" id="RHEA:29463"/>
        <dbReference type="ChEBI" id="CHEBI:29103"/>
    </reaction>
</comment>
<comment type="activity regulation">
    <text evidence="3">Ethanol and carbon monoxide-bound heme increase channel activation. Heme inhibits channel activation (By similarity).</text>
</comment>
<comment type="subunit">
    <text evidence="3">Homotetramer; which constitutes the calcium-activated potassium channel.</text>
</comment>
<comment type="subcellular location">
    <subcellularLocation>
        <location evidence="3">Cell membrane</location>
        <topology evidence="4">Multi-pass membrane protein</topology>
    </subcellularLocation>
</comment>
<comment type="alternative products">
    <event type="alternative splicing"/>
    <isoform>
        <id>Q90ZC7-1</id>
        <name>1</name>
        <sequence type="displayed"/>
    </isoform>
    <isoform>
        <id>Q90ZC7-2</id>
        <name>2</name>
        <name>xSlo15</name>
        <sequence type="described" ref="VSP_009992"/>
    </isoform>
    <isoform>
        <id>Q90ZC7-3</id>
        <name>3</name>
        <name>xSlo56</name>
        <sequence type="described" ref="VSP_009993"/>
    </isoform>
    <isoform>
        <id>Q90ZC7-4</id>
        <name>4</name>
        <name>xSlo59</name>
        <sequence type="described" ref="VSP_009994"/>
    </isoform>
    <isoform>
        <id>Q90ZC7-5</id>
        <name>5</name>
        <name>xSlo99</name>
        <sequence type="described" ref="VSP_009995"/>
    </isoform>
    <text>Additional isoforms seem to exist.</text>
</comment>
<comment type="tissue specificity">
    <text evidence="7">Expressed in both the somites and neural tube of 1 day embryos. Within the nervous system, it is restricted to dorsal parts, and expressed centrally in regions dedicated to processing of sensory information. Six hours later, it is expressed segmentally within the somites. At this time, it is expressed in a primary sensory organ, the trigeminal ganglion. By 2 days, it is also expressed in other primary sensory organs, such as the otic vesicle, and the eye. Within the retina, it is expressed to an internal layer. In the developing otic vesicle, it is abundantly expressed near the apical surface. Isoform 3 is neural-specific, and is only expressed during late stages of neuronal differentiation.</text>
</comment>
<comment type="developmental stage">
    <text evidence="7">Expressed during embryogenesis before differentiation of excitable tissues.</text>
</comment>
<comment type="domain">
    <text evidence="3">The S0 segment is essential for the modulation by the accessory beta subunits.</text>
</comment>
<comment type="domain">
    <text evidence="3">The S4 segment, which is characterized by a series of positively charged amino acids at every third position, is part of the voltage-sensor.</text>
</comment>
<comment type="domain">
    <text evidence="3">The pore-forming domain (also referred as P region) is imbedded into the membrane, and forms the selectivity filter of the pore. It contains the signature sequence of potassium channels that displays selectivity to potassium (By similarity).</text>
</comment>
<comment type="domain">
    <text evidence="1">The RCK N-terminal domain mediates the homotetramerization, thereby promoting the assembly of monomers into functional potassium channel. It includes binding sites for Ca(2+) and Mg(2+) (By similarity).</text>
</comment>
<comment type="domain">
    <text evidence="3">The heme-binding motif mediates inhibition of channel activation by heme. Carbon monoxide-bound heme leads to increased channel activation (By similarity).</text>
</comment>
<comment type="domain">
    <text evidence="2">The calcium bowl constitutes one of the Ca(2+) sensors and probably acts as a Ca(2+)-binding site. There are however other Ca(2+) sensor regions required for activation of the channel.</text>
</comment>
<comment type="miscellaneous">
    <text>The protein was initially thought to contain two functionally distinct parts: The core channel (from the N-terminus to the S9 segment) that mediates the channel activity, and the cytoplasmic tail (from the S9 segment to the C-terminus) that mediates the calcium sensing. The situation is however more complex, since the core channel contains binding sites for Ca(2+) and Mg(2+).</text>
</comment>
<comment type="similarity">
    <text evidence="9">Belongs to the potassium channel family. Calcium-activated (TC 1.A.1.3) subfamily. KCa1.1/KCNMA1 sub-subfamily.</text>
</comment>
<comment type="caution">
    <text evidence="9">It is uncertain whether Met-1 is the initiator or if the sequence starts further upstream.</text>
</comment>
<keyword id="KW-0025">Alternative splicing</keyword>
<keyword id="KW-0106">Calcium</keyword>
<keyword id="KW-1003">Cell membrane</keyword>
<keyword id="KW-0407">Ion channel</keyword>
<keyword id="KW-0406">Ion transport</keyword>
<keyword id="KW-0460">Magnesium</keyword>
<keyword id="KW-0472">Membrane</keyword>
<keyword id="KW-0479">Metal-binding</keyword>
<keyword id="KW-0630">Potassium</keyword>
<keyword id="KW-0631">Potassium channel</keyword>
<keyword id="KW-0633">Potassium transport</keyword>
<keyword id="KW-1185">Reference proteome</keyword>
<keyword id="KW-0812">Transmembrane</keyword>
<keyword id="KW-1133">Transmembrane helix</keyword>
<keyword id="KW-0813">Transport</keyword>
<keyword id="KW-0851">Voltage-gated channel</keyword>
<organism>
    <name type="scientific">Xenopus laevis</name>
    <name type="common">African clawed frog</name>
    <dbReference type="NCBI Taxonomy" id="8355"/>
    <lineage>
        <taxon>Eukaryota</taxon>
        <taxon>Metazoa</taxon>
        <taxon>Chordata</taxon>
        <taxon>Craniata</taxon>
        <taxon>Vertebrata</taxon>
        <taxon>Euteleostomi</taxon>
        <taxon>Amphibia</taxon>
        <taxon>Batrachia</taxon>
        <taxon>Anura</taxon>
        <taxon>Pipoidea</taxon>
        <taxon>Pipidae</taxon>
        <taxon>Xenopodinae</taxon>
        <taxon>Xenopus</taxon>
        <taxon>Xenopus</taxon>
    </lineage>
</organism>
<sequence length="1196" mass="134501">MATWNASQIILNSMSNIIESPQSKPRPVMASNGASLFIPVTMEVPCDQGTRMWWAFLASSMVTFFGGLFIILVWRTFKYLWTVCCHCGGKNKEAQKVVNVASSQVTDGDYKPTDDKEEVGVAEVGWMTSVKDWAGVMISAQTLTGRVLVVTVFALSIGALMIYFIDSSNPIESCQNFYKDFTLQIDMAFNIFFLLYFGLRFIAANDKLWFWLEVNSVVDFFTVPPVFVSVYLNRSWLGLRFLRALRLIQFSEILQFLNILKTSNSIKLVNLCSIFISTWLTAAGFIHLVENSGDPWRNFENSQDLSYWECMYLLMVTMSTVGYGDVYAKTTLGRLFMVFFILGGLAMFASYVPEIIELIGNRKKYGGSYSAVSGRKHIVVCGHITLESVSNFLKDFLHKDRDDVNVEIVFLHNISPNLELEALFKKHFTQVEFYQGSVLNPHDLARVKIESADACLILANKYCADPDAEDASNIMRVISIKNYHPKIRIITQMLQYHNKAHLLNIPSWNWKDGDDAICLAELKLGFIAQSCLAQGLSTMLANLFSMRSFIKIEEDTWQKYYLEGVANEMYTEYLSSAFVGLSFPAVCELCFVKLKLLMIAIEYKSEKGESRILINPGNHMKIKEGTLGFFIASDAKEVKRAFFYCKACHDDITDPKRIKKCACKRLEDEQPSALSPKKKQRNGGMRHSPNTSPNMMRHDPLLMTGNDQIDNMDSSSVKRYDSTGMFHWCPAKELDKVLLTRSEAAMTVLSGHVVVCIFGDMTSALIGVRNLVMPLRASNFHYHELKHIVFVGSLDYIKREWETLHNFPKVSILPGTPLSRADLRAVNINLCDMCVILSANQNNIDDTSLQDKECILASLNIKSMQFDDSIGLLQANSQGFTPPGMERSSPDNSPLHGVARQASITTGANIPIITELVNDSNVQFLDQDDDDDPDTELYLTQPFACGTAFAVSVLDSLMSATYFNDNILTLIRTLVTGGATPELEALVAEENALRGGYSTPQTLANRDRCRVAQLALYDGPFADLGDGGCYGDLYCKALKTYNMLCFGIYRLRDAHISTPSQCTKRYVITNPPYEFELVPTDLIFCLMQFDHNASQSRASLSHSSHSSHSSSKKSSSVTSILHTASANRQNRVKARDSRDKQKMGQAEKKWYTDETENNYPRNIQIKPMSTHMANQINQYKSTSSLIPPIREVEDEC</sequence>
<evidence type="ECO:0000250" key="1"/>
<evidence type="ECO:0000250" key="2">
    <source>
        <dbReference type="UniProtKB" id="B7ZC96"/>
    </source>
</evidence>
<evidence type="ECO:0000250" key="3">
    <source>
        <dbReference type="UniProtKB" id="Q12791"/>
    </source>
</evidence>
<evidence type="ECO:0000255" key="4"/>
<evidence type="ECO:0000255" key="5">
    <source>
        <dbReference type="PROSITE-ProRule" id="PRU00543"/>
    </source>
</evidence>
<evidence type="ECO:0000256" key="6">
    <source>
        <dbReference type="SAM" id="MobiDB-lite"/>
    </source>
</evidence>
<evidence type="ECO:0000269" key="7">
    <source>
    </source>
</evidence>
<evidence type="ECO:0000303" key="8">
    <source>
    </source>
</evidence>
<evidence type="ECO:0000305" key="9"/>
<reference key="1">
    <citation type="journal article" date="2003" name="J. Neurophysiol.">
        <title>Selective regulation of xSlo splice variants during Xenopus embryogenesis.</title>
        <authorList>
            <person name="Kukuljan M."/>
            <person name="Taylor A."/>
            <person name="Chouinard H."/>
            <person name="Olguin P."/>
            <person name="Rojas C.V."/>
            <person name="Ribera A.B."/>
        </authorList>
    </citation>
    <scope>NUCLEOTIDE SEQUENCE [MRNA] (ISOFORMS 1; 2; 3; 4 AND 5)</scope>
    <scope>TISSUE SPECIFICITY</scope>
    <scope>DEVELOPMENTAL STAGE</scope>
    <scope>FUNCTION</scope>
    <scope>TRANSPORTER ACTIVITY</scope>
</reference>
<name>KCMA1_XENLA</name>
<proteinExistence type="evidence at transcript level"/>